<dbReference type="EC" id="2.3.2.27" evidence="4"/>
<dbReference type="EMBL" id="BX284602">
    <property type="protein sequence ID" value="CCD61638.1"/>
    <property type="molecule type" value="Genomic_DNA"/>
</dbReference>
<dbReference type="PIR" id="T32000">
    <property type="entry name" value="T32000"/>
</dbReference>
<dbReference type="RefSeq" id="NP_494234.1">
    <property type="nucleotide sequence ID" value="NM_061833.1"/>
</dbReference>
<dbReference type="SMR" id="O16616"/>
<dbReference type="FunCoup" id="O16616">
    <property type="interactions" value="1094"/>
</dbReference>
<dbReference type="STRING" id="6239.B0281.8.1"/>
<dbReference type="PaxDb" id="6239-B0281.8"/>
<dbReference type="EnsemblMetazoa" id="B0281.8.1">
    <property type="protein sequence ID" value="B0281.8.1"/>
    <property type="gene ID" value="WBGene00015114"/>
</dbReference>
<dbReference type="GeneID" id="181901"/>
<dbReference type="KEGG" id="cel:CELE_B0281.8"/>
<dbReference type="UCSC" id="B0281.8">
    <property type="organism name" value="c. elegans"/>
</dbReference>
<dbReference type="AGR" id="WB:WBGene00015114"/>
<dbReference type="CTD" id="181901"/>
<dbReference type="WormBase" id="B0281.8a">
    <property type="protein sequence ID" value="CE07718"/>
    <property type="gene ID" value="WBGene00015114"/>
    <property type="gene designation" value="trim-21"/>
</dbReference>
<dbReference type="eggNOG" id="KOG4185">
    <property type="taxonomic scope" value="Eukaryota"/>
</dbReference>
<dbReference type="GeneTree" id="ENSGT00940000164246"/>
<dbReference type="HOGENOM" id="CLU_079715_0_0_1"/>
<dbReference type="InParanoid" id="O16616"/>
<dbReference type="OrthoDB" id="6105938at2759"/>
<dbReference type="PhylomeDB" id="O16616"/>
<dbReference type="UniPathway" id="UPA00143"/>
<dbReference type="PRO" id="PR:O16616"/>
<dbReference type="Proteomes" id="UP000001940">
    <property type="component" value="Chromosome II"/>
</dbReference>
<dbReference type="Bgee" id="WBGene00015114">
    <property type="expression patterns" value="Expressed in adult organism"/>
</dbReference>
<dbReference type="GO" id="GO:0005737">
    <property type="term" value="C:cytoplasm"/>
    <property type="evidence" value="ECO:0007669"/>
    <property type="project" value="UniProtKB-SubCell"/>
</dbReference>
<dbReference type="GO" id="GO:0016740">
    <property type="term" value="F:transferase activity"/>
    <property type="evidence" value="ECO:0007669"/>
    <property type="project" value="UniProtKB-KW"/>
</dbReference>
<dbReference type="GO" id="GO:0008270">
    <property type="term" value="F:zinc ion binding"/>
    <property type="evidence" value="ECO:0007669"/>
    <property type="project" value="UniProtKB-KW"/>
</dbReference>
<dbReference type="GO" id="GO:0016567">
    <property type="term" value="P:protein ubiquitination"/>
    <property type="evidence" value="ECO:0007669"/>
    <property type="project" value="UniProtKB-UniPathway"/>
</dbReference>
<dbReference type="CDD" id="cd19774">
    <property type="entry name" value="Bbox2_TRIM23_C-IX_rpt2"/>
    <property type="match status" value="1"/>
</dbReference>
<dbReference type="Gene3D" id="3.30.160.60">
    <property type="entry name" value="Classic Zinc Finger"/>
    <property type="match status" value="1"/>
</dbReference>
<dbReference type="Gene3D" id="3.30.40.10">
    <property type="entry name" value="Zinc/RING finger domain, C3HC4 (zinc finger)"/>
    <property type="match status" value="1"/>
</dbReference>
<dbReference type="InterPro" id="IPR052667">
    <property type="entry name" value="E3_ubiquitin-ligase_RING"/>
</dbReference>
<dbReference type="InterPro" id="IPR027370">
    <property type="entry name" value="Znf-RING_euk"/>
</dbReference>
<dbReference type="InterPro" id="IPR000315">
    <property type="entry name" value="Znf_B-box"/>
</dbReference>
<dbReference type="InterPro" id="IPR001841">
    <property type="entry name" value="Znf_RING"/>
</dbReference>
<dbReference type="InterPro" id="IPR013083">
    <property type="entry name" value="Znf_RING/FYVE/PHD"/>
</dbReference>
<dbReference type="InterPro" id="IPR017907">
    <property type="entry name" value="Znf_RING_CS"/>
</dbReference>
<dbReference type="PANTHER" id="PTHR47156:SF10">
    <property type="entry name" value="E3 UBIQUITIN-PROTEIN LIGASE TRIM-21-RELATED"/>
    <property type="match status" value="1"/>
</dbReference>
<dbReference type="PANTHER" id="PTHR47156">
    <property type="entry name" value="PROTEIN CBG20824"/>
    <property type="match status" value="1"/>
</dbReference>
<dbReference type="Pfam" id="PF13445">
    <property type="entry name" value="zf-RING_UBOX"/>
    <property type="match status" value="1"/>
</dbReference>
<dbReference type="SMART" id="SM00336">
    <property type="entry name" value="BBOX"/>
    <property type="match status" value="1"/>
</dbReference>
<dbReference type="SMART" id="SM00184">
    <property type="entry name" value="RING"/>
    <property type="match status" value="1"/>
</dbReference>
<dbReference type="SUPFAM" id="SSF57845">
    <property type="entry name" value="B-box zinc-binding domain"/>
    <property type="match status" value="1"/>
</dbReference>
<dbReference type="SUPFAM" id="SSF57850">
    <property type="entry name" value="RING/U-box"/>
    <property type="match status" value="1"/>
</dbReference>
<dbReference type="PROSITE" id="PS00518">
    <property type="entry name" value="ZF_RING_1"/>
    <property type="match status" value="1"/>
</dbReference>
<dbReference type="PROSITE" id="PS50089">
    <property type="entry name" value="ZF_RING_2"/>
    <property type="match status" value="1"/>
</dbReference>
<organism evidence="7">
    <name type="scientific">Caenorhabditis elegans</name>
    <dbReference type="NCBI Taxonomy" id="6239"/>
    <lineage>
        <taxon>Eukaryota</taxon>
        <taxon>Metazoa</taxon>
        <taxon>Ecdysozoa</taxon>
        <taxon>Nematoda</taxon>
        <taxon>Chromadorea</taxon>
        <taxon>Rhabditida</taxon>
        <taxon>Rhabditina</taxon>
        <taxon>Rhabditomorpha</taxon>
        <taxon>Rhabditoidea</taxon>
        <taxon>Rhabditidae</taxon>
        <taxon>Peloderinae</taxon>
        <taxon>Caenorhabditis</taxon>
    </lineage>
</organism>
<name>TRI21_CAEEL</name>
<proteinExistence type="evidence at protein level"/>
<accession>O16616</accession>
<protein>
    <recommendedName>
        <fullName evidence="5">E3 ubiquitin-protein ligase trim-21</fullName>
        <ecNumber evidence="4">2.3.2.27</ecNumber>
    </recommendedName>
</protein>
<feature type="chain" id="PRO_0000458256" description="E3 ubiquitin-protein ligase trim-21">
    <location>
        <begin position="1"/>
        <end position="292"/>
    </location>
</feature>
<feature type="zinc finger region" description="RING-type" evidence="3">
    <location>
        <begin position="6"/>
        <end position="52"/>
    </location>
</feature>
<feature type="zinc finger region" description="B box-type" evidence="2">
    <location>
        <begin position="90"/>
        <end position="137"/>
    </location>
</feature>
<feature type="coiled-coil region" evidence="1">
    <location>
        <begin position="152"/>
        <end position="179"/>
    </location>
</feature>
<feature type="binding site" evidence="6">
    <location>
        <position position="95"/>
    </location>
    <ligand>
        <name>Zn(2+)</name>
        <dbReference type="ChEBI" id="CHEBI:29105"/>
    </ligand>
</feature>
<feature type="binding site" evidence="6">
    <location>
        <position position="98"/>
    </location>
    <ligand>
        <name>Zn(2+)</name>
        <dbReference type="ChEBI" id="CHEBI:29105"/>
    </ligand>
</feature>
<feature type="binding site" evidence="2">
    <location>
        <position position="123"/>
    </location>
    <ligand>
        <name>Zn(2+)</name>
        <dbReference type="ChEBI" id="CHEBI:29105"/>
    </ligand>
</feature>
<feature type="binding site" evidence="2">
    <location>
        <position position="129"/>
    </location>
    <ligand>
        <name>Zn(2+)</name>
        <dbReference type="ChEBI" id="CHEBI:29105"/>
    </ligand>
</feature>
<comment type="function">
    <text evidence="4">E3 ubiquitin-protein ligase which catalyzes 'Lys-48'-linked polyubiquitination of ced-1, promoting its proteasomal degradation to maintain appropriate ced-1 levels for apoptotic cell clearance (PubMed:35929733). Acts together with E2 ubiquitin-conjugating enzyme ubc-21 (PubMed:35929733).</text>
</comment>
<comment type="catalytic activity">
    <reaction evidence="4">
        <text>S-ubiquitinyl-[E2 ubiquitin-conjugating enzyme]-L-cysteine + [acceptor protein]-L-lysine = [E2 ubiquitin-conjugating enzyme]-L-cysteine + N(6)-ubiquitinyl-[acceptor protein]-L-lysine.</text>
        <dbReference type="EC" id="2.3.2.27"/>
    </reaction>
</comment>
<comment type="pathway">
    <text evidence="4">Protein modification; protein ubiquitination.</text>
</comment>
<comment type="subunit">
    <text evidence="4">Interacts with E2 ubiquitin-conjugating enzyme ubc-21 (PubMed:35929733). Interacts with ced-6; this mediates interaction of trim-21 with ced-1 and is required for ced-1 ubiquitination (PubMed:35929733). Interacts with nck-1; the interaction is required for ced-1 ubiquitination (PubMed:35929733).</text>
</comment>
<comment type="subcellular location">
    <subcellularLocation>
        <location evidence="4">Cytoplasm</location>
    </subcellularLocation>
</comment>
<comment type="tissue specificity">
    <text evidence="4">In early larva, observed mainly in pharyngeal and body wall muscle cells.</text>
</comment>
<comment type="domain">
    <text evidence="4">The coiled coil is required for interactions with ced-1, ced-6 and ubc-21.</text>
</comment>
<comment type="disruption phenotype">
    <text evidence="4">RNAi-mediated knockdown results in increased levels of ced-1.</text>
</comment>
<comment type="similarity">
    <text evidence="6">Belongs to the TRIM/RBCC family.</text>
</comment>
<sequence>MQVPKCEICDDDFSSEEDGDHNPRNLKCSHTLCEGCIKKLLKNGRVVCPFCREPTEVPVYNIKSLHKNFSLIQMIKIVTKTTEVEKNWDNFPPKCVEHPYNVAEFACIESNCSSKNKLMCQTCEEFGAHKGHAKELLITKTDKFRKKLEFWINQLKLNIQNCTVKKNELEEAVVKSEQLLNIKVKKIKNHFDKIRQSVDKKEKGIIDETTAEATRIQKFNNEKITYLIDLQARHVKDIEAIEKQKNMTDIDLYNTGIDLPCFFGHLNIEVFRPADTKEMDIKLPNFKFEDGS</sequence>
<reference evidence="7" key="1">
    <citation type="journal article" date="1998" name="Science">
        <title>Genome sequence of the nematode C. elegans: a platform for investigating biology.</title>
        <authorList>
            <consortium name="The C. elegans sequencing consortium"/>
        </authorList>
    </citation>
    <scope>NUCLEOTIDE SEQUENCE [LARGE SCALE GENOMIC DNA]</scope>
    <source>
        <strain evidence="7">Bristol N2</strain>
    </source>
</reference>
<reference evidence="6" key="2">
    <citation type="journal article" date="2022" name="Elife">
        <title>trim-21 promotes proteasomal degradation of CED-1 for apoptotic cell clearance in C. elegans.</title>
        <authorList>
            <person name="Yuan L."/>
            <person name="Li P."/>
            <person name="Jing H."/>
            <person name="Zheng Q."/>
            <person name="Xiao H."/>
        </authorList>
    </citation>
    <scope>FUNCTION</scope>
    <scope>CATALYTIC ACTIVITY</scope>
    <scope>PATHWAY</scope>
    <scope>INTERACTION WITH CED-6; NCK-1 AND UBC-21</scope>
    <scope>SUBCELLULAR LOCATION</scope>
    <scope>TISSUE SPECIFICITY</scope>
    <scope>DOMAIN</scope>
    <scope>DISRUPTION PHENOTYPE</scope>
</reference>
<evidence type="ECO:0000255" key="1"/>
<evidence type="ECO:0000255" key="2">
    <source>
        <dbReference type="PROSITE-ProRule" id="PRU00024"/>
    </source>
</evidence>
<evidence type="ECO:0000255" key="3">
    <source>
        <dbReference type="PROSITE-ProRule" id="PRU00175"/>
    </source>
</evidence>
<evidence type="ECO:0000269" key="4">
    <source>
    </source>
</evidence>
<evidence type="ECO:0000303" key="5">
    <source>
    </source>
</evidence>
<evidence type="ECO:0000305" key="6"/>
<evidence type="ECO:0000312" key="7">
    <source>
        <dbReference type="Proteomes" id="UP000001940"/>
    </source>
</evidence>
<evidence type="ECO:0000312" key="8">
    <source>
        <dbReference type="WormBase" id="B0281.8a"/>
    </source>
</evidence>
<keyword id="KW-0175">Coiled coil</keyword>
<keyword id="KW-0963">Cytoplasm</keyword>
<keyword id="KW-0479">Metal-binding</keyword>
<keyword id="KW-1185">Reference proteome</keyword>
<keyword id="KW-0808">Transferase</keyword>
<keyword id="KW-0833">Ubl conjugation pathway</keyword>
<keyword id="KW-0862">Zinc</keyword>
<keyword id="KW-0863">Zinc-finger</keyword>
<gene>
    <name evidence="5 8" type="primary">trim-21</name>
    <name evidence="8" type="ORF">B0281.8</name>
</gene>